<dbReference type="EMBL" id="CP000087">
    <property type="protein sequence ID" value="ABE04620.1"/>
    <property type="molecule type" value="Genomic_DNA"/>
</dbReference>
<dbReference type="RefSeq" id="WP_011477211.1">
    <property type="nucleotide sequence ID" value="NC_007940.1"/>
</dbReference>
<dbReference type="SMR" id="Q1RJ44"/>
<dbReference type="KEGG" id="rbe:RBE_0539"/>
<dbReference type="eggNOG" id="COG2001">
    <property type="taxonomic scope" value="Bacteria"/>
</dbReference>
<dbReference type="HOGENOM" id="CLU_107907_1_0_5"/>
<dbReference type="OrthoDB" id="9807753at2"/>
<dbReference type="Proteomes" id="UP000001951">
    <property type="component" value="Chromosome"/>
</dbReference>
<dbReference type="GO" id="GO:0005737">
    <property type="term" value="C:cytoplasm"/>
    <property type="evidence" value="ECO:0007669"/>
    <property type="project" value="UniProtKB-UniRule"/>
</dbReference>
<dbReference type="GO" id="GO:0009295">
    <property type="term" value="C:nucleoid"/>
    <property type="evidence" value="ECO:0007669"/>
    <property type="project" value="UniProtKB-SubCell"/>
</dbReference>
<dbReference type="GO" id="GO:0003700">
    <property type="term" value="F:DNA-binding transcription factor activity"/>
    <property type="evidence" value="ECO:0007669"/>
    <property type="project" value="UniProtKB-UniRule"/>
</dbReference>
<dbReference type="GO" id="GO:0000976">
    <property type="term" value="F:transcription cis-regulatory region binding"/>
    <property type="evidence" value="ECO:0007669"/>
    <property type="project" value="TreeGrafter"/>
</dbReference>
<dbReference type="GO" id="GO:2000143">
    <property type="term" value="P:negative regulation of DNA-templated transcription initiation"/>
    <property type="evidence" value="ECO:0007669"/>
    <property type="project" value="TreeGrafter"/>
</dbReference>
<dbReference type="CDD" id="cd16321">
    <property type="entry name" value="MraZ_C"/>
    <property type="match status" value="1"/>
</dbReference>
<dbReference type="CDD" id="cd16320">
    <property type="entry name" value="MraZ_N"/>
    <property type="match status" value="1"/>
</dbReference>
<dbReference type="Gene3D" id="3.40.1550.20">
    <property type="entry name" value="Transcriptional regulator MraZ domain"/>
    <property type="match status" value="1"/>
</dbReference>
<dbReference type="HAMAP" id="MF_01008">
    <property type="entry name" value="MraZ"/>
    <property type="match status" value="1"/>
</dbReference>
<dbReference type="InterPro" id="IPR003444">
    <property type="entry name" value="MraZ"/>
</dbReference>
<dbReference type="InterPro" id="IPR035644">
    <property type="entry name" value="MraZ_C"/>
</dbReference>
<dbReference type="InterPro" id="IPR020603">
    <property type="entry name" value="MraZ_dom"/>
</dbReference>
<dbReference type="InterPro" id="IPR035642">
    <property type="entry name" value="MraZ_N"/>
</dbReference>
<dbReference type="InterPro" id="IPR038619">
    <property type="entry name" value="MraZ_sf"/>
</dbReference>
<dbReference type="InterPro" id="IPR007159">
    <property type="entry name" value="SpoVT-AbrB_dom"/>
</dbReference>
<dbReference type="InterPro" id="IPR037914">
    <property type="entry name" value="SpoVT-AbrB_sf"/>
</dbReference>
<dbReference type="NCBIfam" id="NF001475">
    <property type="entry name" value="PRK00326.2-1"/>
    <property type="match status" value="1"/>
</dbReference>
<dbReference type="PANTHER" id="PTHR34701">
    <property type="entry name" value="TRANSCRIPTIONAL REGULATOR MRAZ"/>
    <property type="match status" value="1"/>
</dbReference>
<dbReference type="PANTHER" id="PTHR34701:SF1">
    <property type="entry name" value="TRANSCRIPTIONAL REGULATOR MRAZ"/>
    <property type="match status" value="1"/>
</dbReference>
<dbReference type="Pfam" id="PF02381">
    <property type="entry name" value="MraZ"/>
    <property type="match status" value="1"/>
</dbReference>
<dbReference type="SUPFAM" id="SSF89447">
    <property type="entry name" value="AbrB/MazE/MraZ-like"/>
    <property type="match status" value="1"/>
</dbReference>
<dbReference type="PROSITE" id="PS51740">
    <property type="entry name" value="SPOVT_ABRB"/>
    <property type="match status" value="2"/>
</dbReference>
<gene>
    <name evidence="1" type="primary">mraZ</name>
    <name type="ordered locus">RBE_0539</name>
</gene>
<accession>Q1RJ44</accession>
<evidence type="ECO:0000255" key="1">
    <source>
        <dbReference type="HAMAP-Rule" id="MF_01008"/>
    </source>
</evidence>
<evidence type="ECO:0000255" key="2">
    <source>
        <dbReference type="PROSITE-ProRule" id="PRU01076"/>
    </source>
</evidence>
<keyword id="KW-0963">Cytoplasm</keyword>
<keyword id="KW-0238">DNA-binding</keyword>
<keyword id="KW-0677">Repeat</keyword>
<keyword id="KW-0804">Transcription</keyword>
<keyword id="KW-0805">Transcription regulation</keyword>
<name>MRAZ_RICBR</name>
<sequence>MNIFLSKFINNNIDKKGRVSVPANYRAVLGKEAFNGIIAYPSIRNNCIEACGISHIEKLRQMIESLDPYSEERDAFETIIFGEAVQLSFDGEGRVILPASLMQHAGIEDQVCFVGKGVIFEIWQPQNFKDYLASAQKLAHEKRLTLRNTN</sequence>
<reference key="1">
    <citation type="journal article" date="2006" name="PLoS Genet.">
        <title>Genome sequence of Rickettsia bellii illuminates the role of amoebae in gene exchanges between intracellular pathogens.</title>
        <authorList>
            <person name="Ogata H."/>
            <person name="La Scola B."/>
            <person name="Audic S."/>
            <person name="Renesto P."/>
            <person name="Blanc G."/>
            <person name="Robert C."/>
            <person name="Fournier P.-E."/>
            <person name="Claverie J.-M."/>
            <person name="Raoult D."/>
        </authorList>
    </citation>
    <scope>NUCLEOTIDE SEQUENCE [LARGE SCALE GENOMIC DNA]</scope>
    <source>
        <strain>RML369-C</strain>
    </source>
</reference>
<organism>
    <name type="scientific">Rickettsia bellii (strain RML369-C)</name>
    <dbReference type="NCBI Taxonomy" id="336407"/>
    <lineage>
        <taxon>Bacteria</taxon>
        <taxon>Pseudomonadati</taxon>
        <taxon>Pseudomonadota</taxon>
        <taxon>Alphaproteobacteria</taxon>
        <taxon>Rickettsiales</taxon>
        <taxon>Rickettsiaceae</taxon>
        <taxon>Rickettsieae</taxon>
        <taxon>Rickettsia</taxon>
        <taxon>belli group</taxon>
    </lineage>
</organism>
<comment type="subunit">
    <text evidence="1">Forms oligomers.</text>
</comment>
<comment type="subcellular location">
    <subcellularLocation>
        <location evidence="1">Cytoplasm</location>
        <location evidence="1">Nucleoid</location>
    </subcellularLocation>
</comment>
<comment type="similarity">
    <text evidence="1">Belongs to the MraZ family.</text>
</comment>
<proteinExistence type="inferred from homology"/>
<protein>
    <recommendedName>
        <fullName>Transcriptional regulator MraZ</fullName>
    </recommendedName>
</protein>
<feature type="chain" id="PRO_0000277933" description="Transcriptional regulator MraZ">
    <location>
        <begin position="1"/>
        <end position="150"/>
    </location>
</feature>
<feature type="domain" description="SpoVT-AbrB 1" evidence="2">
    <location>
        <begin position="8"/>
        <end position="55"/>
    </location>
</feature>
<feature type="domain" description="SpoVT-AbrB 2" evidence="2">
    <location>
        <begin position="84"/>
        <end position="127"/>
    </location>
</feature>